<gene>
    <name evidence="1" type="primary">adc2</name>
    <name type="ordered locus">mlr2399</name>
</gene>
<dbReference type="EC" id="4.1.1.4" evidence="1"/>
<dbReference type="EMBL" id="BA000012">
    <property type="protein sequence ID" value="BAB49540.1"/>
    <property type="molecule type" value="Genomic_DNA"/>
</dbReference>
<dbReference type="RefSeq" id="WP_010910892.1">
    <property type="nucleotide sequence ID" value="NC_002678.2"/>
</dbReference>
<dbReference type="SMR" id="Q98IH6"/>
<dbReference type="KEGG" id="mlo:mlr2399"/>
<dbReference type="PATRIC" id="fig|266835.9.peg.1930"/>
<dbReference type="eggNOG" id="COG4689">
    <property type="taxonomic scope" value="Bacteria"/>
</dbReference>
<dbReference type="HOGENOM" id="CLU_077089_0_0_5"/>
<dbReference type="Proteomes" id="UP000000552">
    <property type="component" value="Chromosome"/>
</dbReference>
<dbReference type="GO" id="GO:0047602">
    <property type="term" value="F:acetoacetate decarboxylase activity"/>
    <property type="evidence" value="ECO:0007669"/>
    <property type="project" value="UniProtKB-UniRule"/>
</dbReference>
<dbReference type="Gene3D" id="2.40.400.10">
    <property type="entry name" value="Acetoacetate decarboxylase-like"/>
    <property type="match status" value="1"/>
</dbReference>
<dbReference type="HAMAP" id="MF_00597">
    <property type="entry name" value="ADC"/>
    <property type="match status" value="1"/>
</dbReference>
<dbReference type="InterPro" id="IPR010451">
    <property type="entry name" value="Acetoacetate_decarboxylase"/>
</dbReference>
<dbReference type="InterPro" id="IPR023653">
    <property type="entry name" value="Acetoacetate_decarboxylase_bac"/>
</dbReference>
<dbReference type="InterPro" id="IPR023375">
    <property type="entry name" value="ADC_dom_sf"/>
</dbReference>
<dbReference type="NCBIfam" id="NF002614">
    <property type="entry name" value="PRK02265.1"/>
    <property type="match status" value="1"/>
</dbReference>
<dbReference type="Pfam" id="PF06314">
    <property type="entry name" value="ADC"/>
    <property type="match status" value="1"/>
</dbReference>
<dbReference type="SUPFAM" id="SSF160104">
    <property type="entry name" value="Acetoacetate decarboxylase-like"/>
    <property type="match status" value="1"/>
</dbReference>
<proteinExistence type="inferred from homology"/>
<organism>
    <name type="scientific">Mesorhizobium japonicum (strain LMG 29417 / CECT 9101 / MAFF 303099)</name>
    <name type="common">Mesorhizobium loti (strain MAFF 303099)</name>
    <dbReference type="NCBI Taxonomy" id="266835"/>
    <lineage>
        <taxon>Bacteria</taxon>
        <taxon>Pseudomonadati</taxon>
        <taxon>Pseudomonadota</taxon>
        <taxon>Alphaproteobacteria</taxon>
        <taxon>Hyphomicrobiales</taxon>
        <taxon>Phyllobacteriaceae</taxon>
        <taxon>Mesorhizobium</taxon>
    </lineage>
</organism>
<feature type="chain" id="PRO_0000207107" description="Acetoacetate decarboxylase 2">
    <location>
        <begin position="1"/>
        <end position="261"/>
    </location>
</feature>
<feature type="active site" description="Schiff-base intermediate with acetoacetate" evidence="1">
    <location>
        <position position="116"/>
    </location>
</feature>
<accession>Q98IH6</accession>
<evidence type="ECO:0000255" key="1">
    <source>
        <dbReference type="HAMAP-Rule" id="MF_00597"/>
    </source>
</evidence>
<keyword id="KW-0210">Decarboxylase</keyword>
<keyword id="KW-0456">Lyase</keyword>
<keyword id="KW-0704">Schiff base</keyword>
<name>ADC2_RHILO</name>
<sequence length="261" mass="29002">MHQDTVRATAFAMPLTSPAYPVGPYRFRNREYLIITYRTDPKKLRSLVPEPLELSEPLVKFEFIRMPDSTGFGNYTESGQVIPVTFRGRKGSYTHCMFLNDHPPIAGGRELWGFPKKLATPTLRTETDTLVGTLDYGPVRVATATMGYKHEAADLSAVRSSLAEPNFLLKIIPHVDGTPRICELVEYHLEDVDLRGAWAGPASLNLWSHALAPVAELPVLEVVSAMHIVADLTLALGKVVHDYLPKSEPRDLKGRSHAFAE</sequence>
<comment type="function">
    <text evidence="1">Catalyzes the conversion of acetoacetate to acetone and carbon dioxide.</text>
</comment>
<comment type="catalytic activity">
    <reaction evidence="1">
        <text>acetoacetate + H(+) = acetone + CO2</text>
        <dbReference type="Rhea" id="RHEA:19729"/>
        <dbReference type="ChEBI" id="CHEBI:13705"/>
        <dbReference type="ChEBI" id="CHEBI:15347"/>
        <dbReference type="ChEBI" id="CHEBI:15378"/>
        <dbReference type="ChEBI" id="CHEBI:16526"/>
        <dbReference type="EC" id="4.1.1.4"/>
    </reaction>
</comment>
<comment type="similarity">
    <text evidence="1">Belongs to the ADC family.</text>
</comment>
<reference key="1">
    <citation type="journal article" date="2000" name="DNA Res.">
        <title>Complete genome structure of the nitrogen-fixing symbiotic bacterium Mesorhizobium loti.</title>
        <authorList>
            <person name="Kaneko T."/>
            <person name="Nakamura Y."/>
            <person name="Sato S."/>
            <person name="Asamizu E."/>
            <person name="Kato T."/>
            <person name="Sasamoto S."/>
            <person name="Watanabe A."/>
            <person name="Idesawa K."/>
            <person name="Ishikawa A."/>
            <person name="Kawashima K."/>
            <person name="Kimura T."/>
            <person name="Kishida Y."/>
            <person name="Kiyokawa C."/>
            <person name="Kohara M."/>
            <person name="Matsumoto M."/>
            <person name="Matsuno A."/>
            <person name="Mochizuki Y."/>
            <person name="Nakayama S."/>
            <person name="Nakazaki N."/>
            <person name="Shimpo S."/>
            <person name="Sugimoto M."/>
            <person name="Takeuchi C."/>
            <person name="Yamada M."/>
            <person name="Tabata S."/>
        </authorList>
    </citation>
    <scope>NUCLEOTIDE SEQUENCE [LARGE SCALE GENOMIC DNA]</scope>
    <source>
        <strain>LMG 29417 / CECT 9101 / MAFF 303099</strain>
    </source>
</reference>
<protein>
    <recommendedName>
        <fullName evidence="1">Acetoacetate decarboxylase 2</fullName>
        <shortName evidence="1">AAD 2</shortName>
        <shortName evidence="1">ADC 2</shortName>
        <ecNumber evidence="1">4.1.1.4</ecNumber>
    </recommendedName>
</protein>